<gene>
    <name evidence="1" type="primary">ndk</name>
    <name type="ordered locus">SEN2506</name>
</gene>
<name>NDK_SALEP</name>
<accession>B5R585</accession>
<feature type="chain" id="PRO_1000125011" description="Nucleoside diphosphate kinase">
    <location>
        <begin position="1"/>
        <end position="143"/>
    </location>
</feature>
<feature type="active site" description="Pros-phosphohistidine intermediate" evidence="1">
    <location>
        <position position="117"/>
    </location>
</feature>
<feature type="binding site" evidence="1">
    <location>
        <position position="11"/>
    </location>
    <ligand>
        <name>ATP</name>
        <dbReference type="ChEBI" id="CHEBI:30616"/>
    </ligand>
</feature>
<feature type="binding site" evidence="1">
    <location>
        <position position="59"/>
    </location>
    <ligand>
        <name>ATP</name>
        <dbReference type="ChEBI" id="CHEBI:30616"/>
    </ligand>
</feature>
<feature type="binding site" evidence="1">
    <location>
        <position position="87"/>
    </location>
    <ligand>
        <name>ATP</name>
        <dbReference type="ChEBI" id="CHEBI:30616"/>
    </ligand>
</feature>
<feature type="binding site" evidence="1">
    <location>
        <position position="93"/>
    </location>
    <ligand>
        <name>ATP</name>
        <dbReference type="ChEBI" id="CHEBI:30616"/>
    </ligand>
</feature>
<feature type="binding site" evidence="1">
    <location>
        <position position="104"/>
    </location>
    <ligand>
        <name>ATP</name>
        <dbReference type="ChEBI" id="CHEBI:30616"/>
    </ligand>
</feature>
<feature type="binding site" evidence="1">
    <location>
        <position position="114"/>
    </location>
    <ligand>
        <name>ATP</name>
        <dbReference type="ChEBI" id="CHEBI:30616"/>
    </ligand>
</feature>
<dbReference type="EC" id="2.7.4.6" evidence="1"/>
<dbReference type="EMBL" id="AM933172">
    <property type="protein sequence ID" value="CAR34089.1"/>
    <property type="molecule type" value="Genomic_DNA"/>
</dbReference>
<dbReference type="RefSeq" id="WP_000963846.1">
    <property type="nucleotide sequence ID" value="NC_011294.1"/>
</dbReference>
<dbReference type="SMR" id="B5R585"/>
<dbReference type="KEGG" id="set:SEN2506"/>
<dbReference type="HOGENOM" id="CLU_060216_8_1_6"/>
<dbReference type="Proteomes" id="UP000000613">
    <property type="component" value="Chromosome"/>
</dbReference>
<dbReference type="GO" id="GO:0005737">
    <property type="term" value="C:cytoplasm"/>
    <property type="evidence" value="ECO:0007669"/>
    <property type="project" value="UniProtKB-SubCell"/>
</dbReference>
<dbReference type="GO" id="GO:0005524">
    <property type="term" value="F:ATP binding"/>
    <property type="evidence" value="ECO:0007669"/>
    <property type="project" value="UniProtKB-UniRule"/>
</dbReference>
<dbReference type="GO" id="GO:0046872">
    <property type="term" value="F:metal ion binding"/>
    <property type="evidence" value="ECO:0007669"/>
    <property type="project" value="UniProtKB-KW"/>
</dbReference>
<dbReference type="GO" id="GO:0004550">
    <property type="term" value="F:nucleoside diphosphate kinase activity"/>
    <property type="evidence" value="ECO:0007669"/>
    <property type="project" value="UniProtKB-UniRule"/>
</dbReference>
<dbReference type="GO" id="GO:0006241">
    <property type="term" value="P:CTP biosynthetic process"/>
    <property type="evidence" value="ECO:0007669"/>
    <property type="project" value="UniProtKB-UniRule"/>
</dbReference>
<dbReference type="GO" id="GO:0006183">
    <property type="term" value="P:GTP biosynthetic process"/>
    <property type="evidence" value="ECO:0007669"/>
    <property type="project" value="UniProtKB-UniRule"/>
</dbReference>
<dbReference type="GO" id="GO:0006228">
    <property type="term" value="P:UTP biosynthetic process"/>
    <property type="evidence" value="ECO:0007669"/>
    <property type="project" value="UniProtKB-UniRule"/>
</dbReference>
<dbReference type="CDD" id="cd04413">
    <property type="entry name" value="NDPk_I"/>
    <property type="match status" value="1"/>
</dbReference>
<dbReference type="FunFam" id="3.30.70.141:FF:000001">
    <property type="entry name" value="Nucleoside diphosphate kinase"/>
    <property type="match status" value="1"/>
</dbReference>
<dbReference type="Gene3D" id="3.30.70.141">
    <property type="entry name" value="Nucleoside diphosphate kinase-like domain"/>
    <property type="match status" value="1"/>
</dbReference>
<dbReference type="HAMAP" id="MF_00451">
    <property type="entry name" value="NDP_kinase"/>
    <property type="match status" value="1"/>
</dbReference>
<dbReference type="InterPro" id="IPR034907">
    <property type="entry name" value="NDK-like_dom"/>
</dbReference>
<dbReference type="InterPro" id="IPR036850">
    <property type="entry name" value="NDK-like_dom_sf"/>
</dbReference>
<dbReference type="InterPro" id="IPR001564">
    <property type="entry name" value="Nucleoside_diP_kinase"/>
</dbReference>
<dbReference type="InterPro" id="IPR023005">
    <property type="entry name" value="Nucleoside_diP_kinase_AS"/>
</dbReference>
<dbReference type="NCBIfam" id="NF001908">
    <property type="entry name" value="PRK00668.1"/>
    <property type="match status" value="1"/>
</dbReference>
<dbReference type="PANTHER" id="PTHR46161">
    <property type="entry name" value="NUCLEOSIDE DIPHOSPHATE KINASE"/>
    <property type="match status" value="1"/>
</dbReference>
<dbReference type="PANTHER" id="PTHR46161:SF3">
    <property type="entry name" value="NUCLEOSIDE DIPHOSPHATE KINASE DDB_G0292928-RELATED"/>
    <property type="match status" value="1"/>
</dbReference>
<dbReference type="Pfam" id="PF00334">
    <property type="entry name" value="NDK"/>
    <property type="match status" value="1"/>
</dbReference>
<dbReference type="PRINTS" id="PR01243">
    <property type="entry name" value="NUCDPKINASE"/>
</dbReference>
<dbReference type="SMART" id="SM00562">
    <property type="entry name" value="NDK"/>
    <property type="match status" value="1"/>
</dbReference>
<dbReference type="SUPFAM" id="SSF54919">
    <property type="entry name" value="Nucleoside diphosphate kinase, NDK"/>
    <property type="match status" value="1"/>
</dbReference>
<dbReference type="PROSITE" id="PS00469">
    <property type="entry name" value="NDPK"/>
    <property type="match status" value="1"/>
</dbReference>
<dbReference type="PROSITE" id="PS51374">
    <property type="entry name" value="NDPK_LIKE"/>
    <property type="match status" value="1"/>
</dbReference>
<evidence type="ECO:0000255" key="1">
    <source>
        <dbReference type="HAMAP-Rule" id="MF_00451"/>
    </source>
</evidence>
<organism>
    <name type="scientific">Salmonella enteritidis PT4 (strain P125109)</name>
    <dbReference type="NCBI Taxonomy" id="550537"/>
    <lineage>
        <taxon>Bacteria</taxon>
        <taxon>Pseudomonadati</taxon>
        <taxon>Pseudomonadota</taxon>
        <taxon>Gammaproteobacteria</taxon>
        <taxon>Enterobacterales</taxon>
        <taxon>Enterobacteriaceae</taxon>
        <taxon>Salmonella</taxon>
    </lineage>
</organism>
<reference key="1">
    <citation type="journal article" date="2008" name="Genome Res.">
        <title>Comparative genome analysis of Salmonella enteritidis PT4 and Salmonella gallinarum 287/91 provides insights into evolutionary and host adaptation pathways.</title>
        <authorList>
            <person name="Thomson N.R."/>
            <person name="Clayton D.J."/>
            <person name="Windhorst D."/>
            <person name="Vernikos G."/>
            <person name="Davidson S."/>
            <person name="Churcher C."/>
            <person name="Quail M.A."/>
            <person name="Stevens M."/>
            <person name="Jones M.A."/>
            <person name="Watson M."/>
            <person name="Barron A."/>
            <person name="Layton A."/>
            <person name="Pickard D."/>
            <person name="Kingsley R.A."/>
            <person name="Bignell A."/>
            <person name="Clark L."/>
            <person name="Harris B."/>
            <person name="Ormond D."/>
            <person name="Abdellah Z."/>
            <person name="Brooks K."/>
            <person name="Cherevach I."/>
            <person name="Chillingworth T."/>
            <person name="Woodward J."/>
            <person name="Norberczak H."/>
            <person name="Lord A."/>
            <person name="Arrowsmith C."/>
            <person name="Jagels K."/>
            <person name="Moule S."/>
            <person name="Mungall K."/>
            <person name="Saunders M."/>
            <person name="Whitehead S."/>
            <person name="Chabalgoity J.A."/>
            <person name="Maskell D."/>
            <person name="Humphreys T."/>
            <person name="Roberts M."/>
            <person name="Barrow P.A."/>
            <person name="Dougan G."/>
            <person name="Parkhill J."/>
        </authorList>
    </citation>
    <scope>NUCLEOTIDE SEQUENCE [LARGE SCALE GENOMIC DNA]</scope>
    <source>
        <strain>P125109</strain>
    </source>
</reference>
<keyword id="KW-0067">ATP-binding</keyword>
<keyword id="KW-0963">Cytoplasm</keyword>
<keyword id="KW-0418">Kinase</keyword>
<keyword id="KW-0460">Magnesium</keyword>
<keyword id="KW-0479">Metal-binding</keyword>
<keyword id="KW-0546">Nucleotide metabolism</keyword>
<keyword id="KW-0547">Nucleotide-binding</keyword>
<keyword id="KW-0597">Phosphoprotein</keyword>
<keyword id="KW-0808">Transferase</keyword>
<protein>
    <recommendedName>
        <fullName evidence="1">Nucleoside diphosphate kinase</fullName>
        <shortName evidence="1">NDK</shortName>
        <shortName evidence="1">NDP kinase</shortName>
        <ecNumber evidence="1">2.7.4.6</ecNumber>
    </recommendedName>
    <alternativeName>
        <fullName evidence="1">Nucleoside-2-P kinase</fullName>
    </alternativeName>
</protein>
<proteinExistence type="inferred from homology"/>
<sequence length="143" mass="15522">MAIERTFSIIKPNAVAKNVIGSIFARFEAAGFKIVGTKMLHLTVEQARGFYAEHDGKPFFDGLVEFMTSGPIVVSVLESENAVQRHRDLLGATNPANALAGTLRADYADSLTENGTHGSDSLESAQREIAFFFGEGEVCPRTR</sequence>
<comment type="function">
    <text evidence="1">Major role in the synthesis of nucleoside triphosphates other than ATP. The ATP gamma phosphate is transferred to the NDP beta phosphate via a ping-pong mechanism, using a phosphorylated active-site intermediate.</text>
</comment>
<comment type="catalytic activity">
    <reaction evidence="1">
        <text>a 2'-deoxyribonucleoside 5'-diphosphate + ATP = a 2'-deoxyribonucleoside 5'-triphosphate + ADP</text>
        <dbReference type="Rhea" id="RHEA:44640"/>
        <dbReference type="ChEBI" id="CHEBI:30616"/>
        <dbReference type="ChEBI" id="CHEBI:61560"/>
        <dbReference type="ChEBI" id="CHEBI:73316"/>
        <dbReference type="ChEBI" id="CHEBI:456216"/>
        <dbReference type="EC" id="2.7.4.6"/>
    </reaction>
</comment>
<comment type="catalytic activity">
    <reaction evidence="1">
        <text>a ribonucleoside 5'-diphosphate + ATP = a ribonucleoside 5'-triphosphate + ADP</text>
        <dbReference type="Rhea" id="RHEA:18113"/>
        <dbReference type="ChEBI" id="CHEBI:30616"/>
        <dbReference type="ChEBI" id="CHEBI:57930"/>
        <dbReference type="ChEBI" id="CHEBI:61557"/>
        <dbReference type="ChEBI" id="CHEBI:456216"/>
        <dbReference type="EC" id="2.7.4.6"/>
    </reaction>
</comment>
<comment type="cofactor">
    <cofactor evidence="1">
        <name>Mg(2+)</name>
        <dbReference type="ChEBI" id="CHEBI:18420"/>
    </cofactor>
</comment>
<comment type="subunit">
    <text evidence="1">Homotetramer.</text>
</comment>
<comment type="subcellular location">
    <subcellularLocation>
        <location evidence="1">Cytoplasm</location>
    </subcellularLocation>
</comment>
<comment type="similarity">
    <text evidence="1">Belongs to the NDK family.</text>
</comment>